<reference key="1">
    <citation type="journal article" date="2006" name="PLoS Genet.">
        <title>Comparative genomics of emerging human ehrlichiosis agents.</title>
        <authorList>
            <person name="Dunning Hotopp J.C."/>
            <person name="Lin M."/>
            <person name="Madupu R."/>
            <person name="Crabtree J."/>
            <person name="Angiuoli S.V."/>
            <person name="Eisen J.A."/>
            <person name="Seshadri R."/>
            <person name="Ren Q."/>
            <person name="Wu M."/>
            <person name="Utterback T.R."/>
            <person name="Smith S."/>
            <person name="Lewis M."/>
            <person name="Khouri H."/>
            <person name="Zhang C."/>
            <person name="Niu H."/>
            <person name="Lin Q."/>
            <person name="Ohashi N."/>
            <person name="Zhi N."/>
            <person name="Nelson W.C."/>
            <person name="Brinkac L.M."/>
            <person name="Dodson R.J."/>
            <person name="Rosovitz M.J."/>
            <person name="Sundaram J.P."/>
            <person name="Daugherty S.C."/>
            <person name="Davidsen T."/>
            <person name="Durkin A.S."/>
            <person name="Gwinn M.L."/>
            <person name="Haft D.H."/>
            <person name="Selengut J.D."/>
            <person name="Sullivan S.A."/>
            <person name="Zafar N."/>
            <person name="Zhou L."/>
            <person name="Benahmed F."/>
            <person name="Forberger H."/>
            <person name="Halpin R."/>
            <person name="Mulligan S."/>
            <person name="Robinson J."/>
            <person name="White O."/>
            <person name="Rikihisa Y."/>
            <person name="Tettelin H."/>
        </authorList>
    </citation>
    <scope>NUCLEOTIDE SEQUENCE [LARGE SCALE GENOMIC DNA]</scope>
    <source>
        <strain>ATCC VR-367 / Miyayama</strain>
    </source>
</reference>
<proteinExistence type="inferred from homology"/>
<name>RF1_NEOSM</name>
<protein>
    <recommendedName>
        <fullName evidence="1">Peptide chain release factor 1</fullName>
        <shortName evidence="1">RF-1</shortName>
    </recommendedName>
</protein>
<sequence>MDNLWGVLEEILNRHTYLADRLRCPEAIASQEFSKLSKEYAELKPKVELIARYKKLKEEQAYLELLVKNPLEDQEIREIGKSDLQAIQDVIPKLELEIKRMLLPKDKDDALNVMLEVRAGTGGDEAALFAASLFHMYQKYAERMKWRFEIISISHNEIGGYKEANASISGSDVFAKLKFESGVHRVQRVPETESAGRIHTSTATVAVLPEPEDVDVKINDKDLRIDVYRSSGPGGQSVNTTDSAVRITHIPTGIVVIQQDEKSQHKNRAKAMKVLRVRLYEIERNKVQQEISSMRKSQIGSGERSEKTRTYNFPQGRITDHRINLTTYRINETVKEGELEPIIEALIRENEARMLAGVEVGFSGDKS</sequence>
<accession>Q2GE03</accession>
<evidence type="ECO:0000255" key="1">
    <source>
        <dbReference type="HAMAP-Rule" id="MF_00093"/>
    </source>
</evidence>
<gene>
    <name evidence="1" type="primary">prfA</name>
    <name type="ordered locus">NSE_0406</name>
</gene>
<keyword id="KW-0963">Cytoplasm</keyword>
<keyword id="KW-0488">Methylation</keyword>
<keyword id="KW-0648">Protein biosynthesis</keyword>
<feature type="chain" id="PRO_0000263304" description="Peptide chain release factor 1">
    <location>
        <begin position="1"/>
        <end position="367"/>
    </location>
</feature>
<feature type="modified residue" description="N5-methylglutamine" evidence="1">
    <location>
        <position position="236"/>
    </location>
</feature>
<dbReference type="EMBL" id="CP000237">
    <property type="protein sequence ID" value="ABD45650.1"/>
    <property type="molecule type" value="Genomic_DNA"/>
</dbReference>
<dbReference type="RefSeq" id="WP_011451799.1">
    <property type="nucleotide sequence ID" value="NC_007798.1"/>
</dbReference>
<dbReference type="SMR" id="Q2GE03"/>
<dbReference type="STRING" id="222891.NSE_0406"/>
<dbReference type="KEGG" id="nse:NSE_0406"/>
<dbReference type="eggNOG" id="COG0216">
    <property type="taxonomic scope" value="Bacteria"/>
</dbReference>
<dbReference type="HOGENOM" id="CLU_036856_0_1_5"/>
<dbReference type="OrthoDB" id="9806673at2"/>
<dbReference type="Proteomes" id="UP000001942">
    <property type="component" value="Chromosome"/>
</dbReference>
<dbReference type="GO" id="GO:0005737">
    <property type="term" value="C:cytoplasm"/>
    <property type="evidence" value="ECO:0007669"/>
    <property type="project" value="UniProtKB-SubCell"/>
</dbReference>
<dbReference type="GO" id="GO:0016149">
    <property type="term" value="F:translation release factor activity, codon specific"/>
    <property type="evidence" value="ECO:0007669"/>
    <property type="project" value="UniProtKB-UniRule"/>
</dbReference>
<dbReference type="FunFam" id="3.30.160.20:FF:000004">
    <property type="entry name" value="Peptide chain release factor 1"/>
    <property type="match status" value="1"/>
</dbReference>
<dbReference type="FunFam" id="3.30.70.1660:FF:000002">
    <property type="entry name" value="Peptide chain release factor 1"/>
    <property type="match status" value="1"/>
</dbReference>
<dbReference type="Gene3D" id="3.30.160.20">
    <property type="match status" value="1"/>
</dbReference>
<dbReference type="Gene3D" id="3.30.70.1660">
    <property type="match status" value="1"/>
</dbReference>
<dbReference type="Gene3D" id="6.10.140.1950">
    <property type="match status" value="1"/>
</dbReference>
<dbReference type="HAMAP" id="MF_00093">
    <property type="entry name" value="Rel_fac_1"/>
    <property type="match status" value="1"/>
</dbReference>
<dbReference type="InterPro" id="IPR005139">
    <property type="entry name" value="PCRF"/>
</dbReference>
<dbReference type="InterPro" id="IPR000352">
    <property type="entry name" value="Pep_chain_release_fac_I"/>
</dbReference>
<dbReference type="InterPro" id="IPR045853">
    <property type="entry name" value="Pep_chain_release_fac_I_sf"/>
</dbReference>
<dbReference type="InterPro" id="IPR050057">
    <property type="entry name" value="Prokaryotic/Mito_RF"/>
</dbReference>
<dbReference type="InterPro" id="IPR004373">
    <property type="entry name" value="RF-1"/>
</dbReference>
<dbReference type="NCBIfam" id="TIGR00019">
    <property type="entry name" value="prfA"/>
    <property type="match status" value="1"/>
</dbReference>
<dbReference type="NCBIfam" id="NF001859">
    <property type="entry name" value="PRK00591.1"/>
    <property type="match status" value="1"/>
</dbReference>
<dbReference type="PANTHER" id="PTHR43804">
    <property type="entry name" value="LD18447P"/>
    <property type="match status" value="1"/>
</dbReference>
<dbReference type="PANTHER" id="PTHR43804:SF7">
    <property type="entry name" value="LD18447P"/>
    <property type="match status" value="1"/>
</dbReference>
<dbReference type="Pfam" id="PF03462">
    <property type="entry name" value="PCRF"/>
    <property type="match status" value="1"/>
</dbReference>
<dbReference type="Pfam" id="PF00472">
    <property type="entry name" value="RF-1"/>
    <property type="match status" value="1"/>
</dbReference>
<dbReference type="SMART" id="SM00937">
    <property type="entry name" value="PCRF"/>
    <property type="match status" value="1"/>
</dbReference>
<dbReference type="SUPFAM" id="SSF75620">
    <property type="entry name" value="Release factor"/>
    <property type="match status" value="1"/>
</dbReference>
<dbReference type="PROSITE" id="PS00745">
    <property type="entry name" value="RF_PROK_I"/>
    <property type="match status" value="1"/>
</dbReference>
<comment type="function">
    <text evidence="1">Peptide chain release factor 1 directs the termination of translation in response to the peptide chain termination codons UAG and UAA.</text>
</comment>
<comment type="subcellular location">
    <subcellularLocation>
        <location evidence="1">Cytoplasm</location>
    </subcellularLocation>
</comment>
<comment type="PTM">
    <text evidence="1">Methylated by PrmC. Methylation increases the termination efficiency of RF1.</text>
</comment>
<comment type="similarity">
    <text evidence="1">Belongs to the prokaryotic/mitochondrial release factor family.</text>
</comment>
<organism>
    <name type="scientific">Neorickettsia sennetsu (strain ATCC VR-367 / Miyayama)</name>
    <name type="common">Ehrlichia sennetsu</name>
    <dbReference type="NCBI Taxonomy" id="222891"/>
    <lineage>
        <taxon>Bacteria</taxon>
        <taxon>Pseudomonadati</taxon>
        <taxon>Pseudomonadota</taxon>
        <taxon>Alphaproteobacteria</taxon>
        <taxon>Rickettsiales</taxon>
        <taxon>Anaplasmataceae</taxon>
        <taxon>Neorickettsia</taxon>
    </lineage>
</organism>